<keyword id="KW-0032">Aminotransferase</keyword>
<keyword id="KW-0663">Pyridoxal phosphate</keyword>
<keyword id="KW-1185">Reference proteome</keyword>
<keyword id="KW-0808">Transferase</keyword>
<feature type="chain" id="PRO_0000312545" description="LL-diaminopimelate aminotransferase">
    <location>
        <begin position="1"/>
        <end position="408"/>
    </location>
</feature>
<feature type="binding site" evidence="1">
    <location>
        <position position="15"/>
    </location>
    <ligand>
        <name>substrate</name>
    </ligand>
</feature>
<feature type="binding site" evidence="1">
    <location>
        <position position="42"/>
    </location>
    <ligand>
        <name>substrate</name>
    </ligand>
</feature>
<feature type="binding site" evidence="1">
    <location>
        <position position="72"/>
    </location>
    <ligand>
        <name>pyridoxal 5'-phosphate</name>
        <dbReference type="ChEBI" id="CHEBI:597326"/>
    </ligand>
</feature>
<feature type="binding site" evidence="1">
    <location>
        <begin position="108"/>
        <end position="109"/>
    </location>
    <ligand>
        <name>pyridoxal 5'-phosphate</name>
        <dbReference type="ChEBI" id="CHEBI:597326"/>
    </ligand>
</feature>
<feature type="binding site" evidence="1">
    <location>
        <position position="109"/>
    </location>
    <ligand>
        <name>substrate</name>
    </ligand>
</feature>
<feature type="binding site" evidence="1">
    <location>
        <position position="132"/>
    </location>
    <ligand>
        <name>pyridoxal 5'-phosphate</name>
        <dbReference type="ChEBI" id="CHEBI:597326"/>
    </ligand>
</feature>
<feature type="binding site" evidence="1">
    <location>
        <position position="132"/>
    </location>
    <ligand>
        <name>substrate</name>
    </ligand>
</feature>
<feature type="binding site" evidence="1">
    <location>
        <position position="187"/>
    </location>
    <ligand>
        <name>pyridoxal 5'-phosphate</name>
        <dbReference type="ChEBI" id="CHEBI:597326"/>
    </ligand>
</feature>
<feature type="binding site" evidence="1">
    <location>
        <position position="187"/>
    </location>
    <ligand>
        <name>substrate</name>
    </ligand>
</feature>
<feature type="binding site" evidence="1">
    <location>
        <position position="218"/>
    </location>
    <ligand>
        <name>pyridoxal 5'-phosphate</name>
        <dbReference type="ChEBI" id="CHEBI:597326"/>
    </ligand>
</feature>
<feature type="binding site" evidence="1">
    <location>
        <begin position="246"/>
        <end position="248"/>
    </location>
    <ligand>
        <name>pyridoxal 5'-phosphate</name>
        <dbReference type="ChEBI" id="CHEBI:597326"/>
    </ligand>
</feature>
<feature type="binding site" evidence="1">
    <location>
        <position position="257"/>
    </location>
    <ligand>
        <name>pyridoxal 5'-phosphate</name>
        <dbReference type="ChEBI" id="CHEBI:597326"/>
    </ligand>
</feature>
<feature type="binding site" evidence="1">
    <location>
        <position position="292"/>
    </location>
    <ligand>
        <name>pyridoxal 5'-phosphate</name>
        <dbReference type="ChEBI" id="CHEBI:597326"/>
    </ligand>
</feature>
<feature type="binding site" evidence="1">
    <location>
        <position position="292"/>
    </location>
    <ligand>
        <name>substrate</name>
    </ligand>
</feature>
<feature type="binding site" evidence="1">
    <location>
        <position position="388"/>
    </location>
    <ligand>
        <name>substrate</name>
    </ligand>
</feature>
<feature type="modified residue" description="N6-(pyridoxal phosphate)lysine" evidence="1">
    <location>
        <position position="249"/>
    </location>
</feature>
<dbReference type="EC" id="2.6.1.83" evidence="1"/>
<dbReference type="EMBL" id="CP000435">
    <property type="protein sequence ID" value="ABI45974.1"/>
    <property type="status" value="ALT_INIT"/>
    <property type="molecule type" value="Genomic_DNA"/>
</dbReference>
<dbReference type="RefSeq" id="WP_041426857.1">
    <property type="nucleotide sequence ID" value="NC_008319.1"/>
</dbReference>
<dbReference type="SMR" id="Q0ID68"/>
<dbReference type="STRING" id="64471.sync_0372"/>
<dbReference type="KEGG" id="syg:sync_0372"/>
<dbReference type="eggNOG" id="COG0436">
    <property type="taxonomic scope" value="Bacteria"/>
</dbReference>
<dbReference type="HOGENOM" id="CLU_051433_0_0_3"/>
<dbReference type="OrthoDB" id="9802328at2"/>
<dbReference type="UniPathway" id="UPA00034">
    <property type="reaction ID" value="UER00466"/>
</dbReference>
<dbReference type="Proteomes" id="UP000001961">
    <property type="component" value="Chromosome"/>
</dbReference>
<dbReference type="GO" id="GO:0010285">
    <property type="term" value="F:L,L-diaminopimelate aminotransferase activity"/>
    <property type="evidence" value="ECO:0007669"/>
    <property type="project" value="UniProtKB-UniRule"/>
</dbReference>
<dbReference type="GO" id="GO:0030170">
    <property type="term" value="F:pyridoxal phosphate binding"/>
    <property type="evidence" value="ECO:0007669"/>
    <property type="project" value="UniProtKB-UniRule"/>
</dbReference>
<dbReference type="GO" id="GO:0033362">
    <property type="term" value="P:lysine biosynthetic process via diaminopimelate, diaminopimelate-aminotransferase pathway"/>
    <property type="evidence" value="ECO:0007669"/>
    <property type="project" value="UniProtKB-UniRule"/>
</dbReference>
<dbReference type="CDD" id="cd00609">
    <property type="entry name" value="AAT_like"/>
    <property type="match status" value="1"/>
</dbReference>
<dbReference type="FunFam" id="3.40.640.10:FF:000099">
    <property type="entry name" value="LL-diaminopimelate aminotransferase, chloroplastic"/>
    <property type="match status" value="1"/>
</dbReference>
<dbReference type="Gene3D" id="3.90.1150.10">
    <property type="entry name" value="Aspartate Aminotransferase, domain 1"/>
    <property type="match status" value="1"/>
</dbReference>
<dbReference type="Gene3D" id="3.40.640.10">
    <property type="entry name" value="Type I PLP-dependent aspartate aminotransferase-like (Major domain)"/>
    <property type="match status" value="1"/>
</dbReference>
<dbReference type="HAMAP" id="MF_01642">
    <property type="entry name" value="DapL_aminotrans_1"/>
    <property type="match status" value="1"/>
</dbReference>
<dbReference type="InterPro" id="IPR004839">
    <property type="entry name" value="Aminotransferase_I/II_large"/>
</dbReference>
<dbReference type="InterPro" id="IPR019942">
    <property type="entry name" value="DapL/ALD1"/>
</dbReference>
<dbReference type="InterPro" id="IPR015424">
    <property type="entry name" value="PyrdxlP-dep_Trfase"/>
</dbReference>
<dbReference type="InterPro" id="IPR015421">
    <property type="entry name" value="PyrdxlP-dep_Trfase_major"/>
</dbReference>
<dbReference type="InterPro" id="IPR015422">
    <property type="entry name" value="PyrdxlP-dep_Trfase_small"/>
</dbReference>
<dbReference type="NCBIfam" id="TIGR03542">
    <property type="entry name" value="DAPAT_plant"/>
    <property type="match status" value="1"/>
</dbReference>
<dbReference type="PANTHER" id="PTHR43144">
    <property type="entry name" value="AMINOTRANSFERASE"/>
    <property type="match status" value="1"/>
</dbReference>
<dbReference type="Pfam" id="PF00155">
    <property type="entry name" value="Aminotran_1_2"/>
    <property type="match status" value="1"/>
</dbReference>
<dbReference type="SUPFAM" id="SSF53383">
    <property type="entry name" value="PLP-dependent transferases"/>
    <property type="match status" value="1"/>
</dbReference>
<comment type="function">
    <text evidence="1">Involved in the synthesis of meso-diaminopimelate (m-DAP or DL-DAP), required for both lysine and peptidoglycan biosynthesis. Catalyzes the direct conversion of tetrahydrodipicolinate to LL-diaminopimelate.</text>
</comment>
<comment type="catalytic activity">
    <reaction evidence="1">
        <text>(2S,6S)-2,6-diaminopimelate + 2-oxoglutarate = (S)-2,3,4,5-tetrahydrodipicolinate + L-glutamate + H2O + H(+)</text>
        <dbReference type="Rhea" id="RHEA:23988"/>
        <dbReference type="ChEBI" id="CHEBI:15377"/>
        <dbReference type="ChEBI" id="CHEBI:15378"/>
        <dbReference type="ChEBI" id="CHEBI:16810"/>
        <dbReference type="ChEBI" id="CHEBI:16845"/>
        <dbReference type="ChEBI" id="CHEBI:29985"/>
        <dbReference type="ChEBI" id="CHEBI:57609"/>
        <dbReference type="EC" id="2.6.1.83"/>
    </reaction>
</comment>
<comment type="cofactor">
    <cofactor evidence="1">
        <name>pyridoxal 5'-phosphate</name>
        <dbReference type="ChEBI" id="CHEBI:597326"/>
    </cofactor>
</comment>
<comment type="pathway">
    <text evidence="1">Amino-acid biosynthesis; L-lysine biosynthesis via DAP pathway; LL-2,6-diaminopimelate from (S)-tetrahydrodipicolinate (aminotransferase route): step 1/1.</text>
</comment>
<comment type="subunit">
    <text evidence="1">Homodimer.</text>
</comment>
<comment type="similarity">
    <text evidence="1">Belongs to the class-I pyridoxal-phosphate-dependent aminotransferase family. LL-diaminopimelate aminotransferase subfamily.</text>
</comment>
<comment type="sequence caution" evidence="2">
    <conflict type="erroneous initiation">
        <sequence resource="EMBL-CDS" id="ABI45974"/>
    </conflict>
</comment>
<sequence>MVKVNGNYLKLKAGYLFPEIGRRVKAFSSANPEAQLIRLGIGDVTEPLPQACRDAMKSAIDEMGTAEGFHGYGPEQGYAWLREAIARDDFQARGCEISAEEIFVSDGSKCDSSNILDILGSGNRIAVTDPVYPVYVDSNVMAGRTGESGDDGRYGGLTYLPISADNGFAAQIPSEPVDLIYLCYPNNPTGAVATKAQLKKWVDYARANKALILFDAAYEAFIQDPELPHSIYEIEGARDCAIEFRSFSKNAGFTGTRCALTVVPKGLKGKADDGSEVELWGLWNRRQSTKFNGVSYIIQRGAEAVYSDAGKQEVKALVSFYMENAAIIRRELSAAGIEVHGGQHAPYVWLKTPSGMDSWSFFDHLLQKANVVGTPGSGFGAAGEGYFRLSAFNSRSNVDEAMARIRNL</sequence>
<protein>
    <recommendedName>
        <fullName evidence="1">LL-diaminopimelate aminotransferase</fullName>
        <shortName evidence="1">DAP-AT</shortName>
        <shortName evidence="1">DAP-aminotransferase</shortName>
        <shortName evidence="1">LL-DAP-aminotransferase</shortName>
        <ecNumber evidence="1">2.6.1.83</ecNumber>
    </recommendedName>
</protein>
<organism>
    <name type="scientific">Synechococcus sp. (strain CC9311)</name>
    <dbReference type="NCBI Taxonomy" id="64471"/>
    <lineage>
        <taxon>Bacteria</taxon>
        <taxon>Bacillati</taxon>
        <taxon>Cyanobacteriota</taxon>
        <taxon>Cyanophyceae</taxon>
        <taxon>Synechococcales</taxon>
        <taxon>Synechococcaceae</taxon>
        <taxon>Synechococcus</taxon>
    </lineage>
</organism>
<gene>
    <name evidence="1" type="primary">dapL</name>
    <name type="synonym">aspB</name>
    <name type="ordered locus">sync_0372</name>
</gene>
<name>DAPAT_SYNS3</name>
<evidence type="ECO:0000255" key="1">
    <source>
        <dbReference type="HAMAP-Rule" id="MF_01642"/>
    </source>
</evidence>
<evidence type="ECO:0000305" key="2"/>
<accession>Q0ID68</accession>
<reference key="1">
    <citation type="journal article" date="2006" name="Proc. Natl. Acad. Sci. U.S.A.">
        <title>Genome sequence of Synechococcus CC9311: insights into adaptation to a coastal environment.</title>
        <authorList>
            <person name="Palenik B."/>
            <person name="Ren Q."/>
            <person name="Dupont C.L."/>
            <person name="Myers G.S."/>
            <person name="Heidelberg J.F."/>
            <person name="Badger J.H."/>
            <person name="Madupu R."/>
            <person name="Nelson W.C."/>
            <person name="Brinkac L.M."/>
            <person name="Dodson R.J."/>
            <person name="Durkin A.S."/>
            <person name="Daugherty S.C."/>
            <person name="Sullivan S.A."/>
            <person name="Khouri H."/>
            <person name="Mohamoud Y."/>
            <person name="Halpin R."/>
            <person name="Paulsen I.T."/>
        </authorList>
    </citation>
    <scope>NUCLEOTIDE SEQUENCE [LARGE SCALE GENOMIC DNA]</scope>
    <source>
        <strain>CC9311</strain>
    </source>
</reference>
<proteinExistence type="inferred from homology"/>